<dbReference type="EC" id="4.2.1.20" evidence="1"/>
<dbReference type="EMBL" id="V01376">
    <property type="protein sequence ID" value="CAA24666.1"/>
    <property type="molecule type" value="Genomic_DNA"/>
</dbReference>
<dbReference type="EMBL" id="J01810">
    <property type="protein sequence ID" value="AAA27235.1"/>
    <property type="molecule type" value="Genomic_DNA"/>
</dbReference>
<dbReference type="EMBL" id="AE006468">
    <property type="protein sequence ID" value="AAL20645.1"/>
    <property type="molecule type" value="Genomic_DNA"/>
</dbReference>
<dbReference type="PIR" id="A93837">
    <property type="entry name" value="TSEBAT"/>
</dbReference>
<dbReference type="RefSeq" id="NP_460686.1">
    <property type="nucleotide sequence ID" value="NC_003197.2"/>
</dbReference>
<dbReference type="RefSeq" id="WP_000443030.1">
    <property type="nucleotide sequence ID" value="NC_003197.2"/>
</dbReference>
<dbReference type="PDB" id="1A50">
    <property type="method" value="X-ray"/>
    <property type="resolution" value="2.30 A"/>
    <property type="chains" value="A=1-268"/>
</dbReference>
<dbReference type="PDB" id="1A5A">
    <property type="method" value="X-ray"/>
    <property type="resolution" value="1.90 A"/>
    <property type="chains" value="A=1-268"/>
</dbReference>
<dbReference type="PDB" id="1A5B">
    <property type="method" value="X-ray"/>
    <property type="resolution" value="2.00 A"/>
    <property type="chains" value="A=1-268"/>
</dbReference>
<dbReference type="PDB" id="1A5S">
    <property type="method" value="X-ray"/>
    <property type="resolution" value="2.30 A"/>
    <property type="chains" value="A=1-268"/>
</dbReference>
<dbReference type="PDB" id="1BEU">
    <property type="method" value="X-ray"/>
    <property type="resolution" value="1.90 A"/>
    <property type="chains" value="A=1-268"/>
</dbReference>
<dbReference type="PDB" id="1BKS">
    <property type="method" value="X-ray"/>
    <property type="resolution" value="2.20 A"/>
    <property type="chains" value="A=1-268"/>
</dbReference>
<dbReference type="PDB" id="1C29">
    <property type="method" value="X-ray"/>
    <property type="resolution" value="2.30 A"/>
    <property type="chains" value="A=1-268"/>
</dbReference>
<dbReference type="PDB" id="1C8V">
    <property type="method" value="X-ray"/>
    <property type="resolution" value="2.20 A"/>
    <property type="chains" value="A=1-268"/>
</dbReference>
<dbReference type="PDB" id="1C9D">
    <property type="method" value="X-ray"/>
    <property type="resolution" value="2.30 A"/>
    <property type="chains" value="A=1-268"/>
</dbReference>
<dbReference type="PDB" id="1CW2">
    <property type="method" value="X-ray"/>
    <property type="resolution" value="2.00 A"/>
    <property type="chains" value="A=1-268"/>
</dbReference>
<dbReference type="PDB" id="1CX9">
    <property type="method" value="X-ray"/>
    <property type="resolution" value="2.30 A"/>
    <property type="chains" value="A=1-268"/>
</dbReference>
<dbReference type="PDB" id="1FUY">
    <property type="method" value="X-ray"/>
    <property type="resolution" value="2.25 A"/>
    <property type="chains" value="A=1-268"/>
</dbReference>
<dbReference type="PDB" id="1K3U">
    <property type="method" value="X-ray"/>
    <property type="resolution" value="1.70 A"/>
    <property type="chains" value="A=1-268"/>
</dbReference>
<dbReference type="PDB" id="1K7E">
    <property type="method" value="X-ray"/>
    <property type="resolution" value="2.30 A"/>
    <property type="chains" value="A=1-268"/>
</dbReference>
<dbReference type="PDB" id="1K7F">
    <property type="method" value="X-ray"/>
    <property type="resolution" value="1.90 A"/>
    <property type="chains" value="A=1-268"/>
</dbReference>
<dbReference type="PDB" id="1K7X">
    <property type="method" value="X-ray"/>
    <property type="resolution" value="1.70 A"/>
    <property type="chains" value="A=1-268"/>
</dbReference>
<dbReference type="PDB" id="1K8X">
    <property type="method" value="X-ray"/>
    <property type="resolution" value="1.90 A"/>
    <property type="chains" value="A=1-268"/>
</dbReference>
<dbReference type="PDB" id="1K8Y">
    <property type="method" value="X-ray"/>
    <property type="resolution" value="1.50 A"/>
    <property type="chains" value="A=1-268"/>
</dbReference>
<dbReference type="PDB" id="1K8Z">
    <property type="method" value="X-ray"/>
    <property type="resolution" value="1.70 A"/>
    <property type="chains" value="A=1-268"/>
</dbReference>
<dbReference type="PDB" id="1KFB">
    <property type="method" value="X-ray"/>
    <property type="resolution" value="1.90 A"/>
    <property type="chains" value="A=1-268"/>
</dbReference>
<dbReference type="PDB" id="1KFC">
    <property type="method" value="X-ray"/>
    <property type="resolution" value="1.50 A"/>
    <property type="chains" value="A=1-268"/>
</dbReference>
<dbReference type="PDB" id="1KFE">
    <property type="method" value="X-ray"/>
    <property type="resolution" value="1.75 A"/>
    <property type="chains" value="A=1-268"/>
</dbReference>
<dbReference type="PDB" id="1KFJ">
    <property type="method" value="X-ray"/>
    <property type="resolution" value="1.80 A"/>
    <property type="chains" value="A=1-268"/>
</dbReference>
<dbReference type="PDB" id="1KFK">
    <property type="method" value="X-ray"/>
    <property type="resolution" value="2.40 A"/>
    <property type="chains" value="A=1-268"/>
</dbReference>
<dbReference type="PDB" id="1QOP">
    <property type="method" value="X-ray"/>
    <property type="resolution" value="1.40 A"/>
    <property type="chains" value="A=1-268"/>
</dbReference>
<dbReference type="PDB" id="1QOQ">
    <property type="method" value="X-ray"/>
    <property type="resolution" value="1.80 A"/>
    <property type="chains" value="A=1-268"/>
</dbReference>
<dbReference type="PDB" id="1TJP">
    <property type="method" value="X-ray"/>
    <property type="resolution" value="1.50 A"/>
    <property type="chains" value="A=1-268"/>
</dbReference>
<dbReference type="PDB" id="1TTP">
    <property type="method" value="X-ray"/>
    <property type="resolution" value="2.30 A"/>
    <property type="chains" value="A=1-268"/>
</dbReference>
<dbReference type="PDB" id="1TTQ">
    <property type="method" value="X-ray"/>
    <property type="resolution" value="2.00 A"/>
    <property type="chains" value="A=1-268"/>
</dbReference>
<dbReference type="PDB" id="1UBS">
    <property type="method" value="X-ray"/>
    <property type="resolution" value="1.90 A"/>
    <property type="chains" value="A=1-268"/>
</dbReference>
<dbReference type="PDB" id="1WBJ">
    <property type="method" value="X-ray"/>
    <property type="resolution" value="1.50 A"/>
    <property type="chains" value="A=1-268"/>
</dbReference>
<dbReference type="PDB" id="2CLE">
    <property type="method" value="X-ray"/>
    <property type="resolution" value="1.50 A"/>
    <property type="chains" value="A=1-268"/>
</dbReference>
<dbReference type="PDB" id="2CLF">
    <property type="method" value="X-ray"/>
    <property type="resolution" value="1.70 A"/>
    <property type="chains" value="A=1-268"/>
</dbReference>
<dbReference type="PDB" id="2CLH">
    <property type="method" value="X-ray"/>
    <property type="resolution" value="1.70 A"/>
    <property type="chains" value="A=1-268"/>
</dbReference>
<dbReference type="PDB" id="2CLI">
    <property type="method" value="X-ray"/>
    <property type="resolution" value="1.70 A"/>
    <property type="chains" value="A=1-268"/>
</dbReference>
<dbReference type="PDB" id="2CLK">
    <property type="method" value="X-ray"/>
    <property type="resolution" value="1.50 A"/>
    <property type="chains" value="A=1-268"/>
</dbReference>
<dbReference type="PDB" id="2CLL">
    <property type="method" value="X-ray"/>
    <property type="resolution" value="1.60 A"/>
    <property type="chains" value="A=1-268"/>
</dbReference>
<dbReference type="PDB" id="2CLM">
    <property type="method" value="X-ray"/>
    <property type="resolution" value="1.51 A"/>
    <property type="chains" value="A=1-268"/>
</dbReference>
<dbReference type="PDB" id="2CLO">
    <property type="method" value="X-ray"/>
    <property type="resolution" value="1.50 A"/>
    <property type="chains" value="A=1-268"/>
</dbReference>
<dbReference type="PDB" id="2J9X">
    <property type="method" value="X-ray"/>
    <property type="resolution" value="1.90 A"/>
    <property type="chains" value="A=1-268"/>
</dbReference>
<dbReference type="PDB" id="2J9Y">
    <property type="method" value="X-ray"/>
    <property type="resolution" value="1.80 A"/>
    <property type="chains" value="A=1-268"/>
</dbReference>
<dbReference type="PDB" id="2J9Z">
    <property type="method" value="X-ray"/>
    <property type="resolution" value="1.80 A"/>
    <property type="chains" value="A=1-268"/>
</dbReference>
<dbReference type="PDB" id="2RH9">
    <property type="method" value="X-ray"/>
    <property type="resolution" value="1.70 A"/>
    <property type="chains" value="A=1-268"/>
</dbReference>
<dbReference type="PDB" id="2RHG">
    <property type="method" value="X-ray"/>
    <property type="resolution" value="2.00 A"/>
    <property type="chains" value="A=1-268"/>
</dbReference>
<dbReference type="PDB" id="2TRS">
    <property type="method" value="X-ray"/>
    <property type="resolution" value="2.04 A"/>
    <property type="chains" value="A=1-268"/>
</dbReference>
<dbReference type="PDB" id="2TSY">
    <property type="method" value="X-ray"/>
    <property type="resolution" value="2.50 A"/>
    <property type="chains" value="A=1-268"/>
</dbReference>
<dbReference type="PDB" id="2TYS">
    <property type="method" value="X-ray"/>
    <property type="resolution" value="1.90 A"/>
    <property type="chains" value="A=1-268"/>
</dbReference>
<dbReference type="PDB" id="2WSY">
    <property type="method" value="X-ray"/>
    <property type="resolution" value="3.05 A"/>
    <property type="chains" value="A=1-268"/>
</dbReference>
<dbReference type="PDB" id="3CEP">
    <property type="method" value="X-ray"/>
    <property type="resolution" value="2.10 A"/>
    <property type="chains" value="A=1-268"/>
</dbReference>
<dbReference type="PDB" id="3PR2">
    <property type="method" value="X-ray"/>
    <property type="resolution" value="1.85 A"/>
    <property type="chains" value="A=2-267"/>
</dbReference>
<dbReference type="PDB" id="4HN4">
    <property type="method" value="X-ray"/>
    <property type="resolution" value="1.64 A"/>
    <property type="chains" value="A=1-268"/>
</dbReference>
<dbReference type="PDB" id="4HPJ">
    <property type="method" value="X-ray"/>
    <property type="resolution" value="1.45 A"/>
    <property type="chains" value="A=1-268"/>
</dbReference>
<dbReference type="PDB" id="4HPX">
    <property type="method" value="X-ray"/>
    <property type="resolution" value="1.65 A"/>
    <property type="chains" value="A=1-268"/>
</dbReference>
<dbReference type="PDB" id="4HT3">
    <property type="method" value="X-ray"/>
    <property type="resolution" value="1.30 A"/>
    <property type="chains" value="A=1-268"/>
</dbReference>
<dbReference type="PDB" id="4KKX">
    <property type="method" value="X-ray"/>
    <property type="resolution" value="1.77 A"/>
    <property type="chains" value="A=1-268"/>
</dbReference>
<dbReference type="PDB" id="4WX2">
    <property type="method" value="X-ray"/>
    <property type="resolution" value="1.75 A"/>
    <property type="chains" value="A=1-268"/>
</dbReference>
<dbReference type="PDB" id="4XUG">
    <property type="method" value="X-ray"/>
    <property type="resolution" value="1.65 A"/>
    <property type="chains" value="A=1-268"/>
</dbReference>
<dbReference type="PDB" id="4Y6G">
    <property type="method" value="X-ray"/>
    <property type="resolution" value="1.65 A"/>
    <property type="chains" value="A=1-268"/>
</dbReference>
<dbReference type="PDB" id="4ZQC">
    <property type="method" value="X-ray"/>
    <property type="resolution" value="1.54 A"/>
    <property type="chains" value="A=1-268"/>
</dbReference>
<dbReference type="PDB" id="5BW6">
    <property type="method" value="X-ray"/>
    <property type="resolution" value="1.82 A"/>
    <property type="chains" value="A=1-268"/>
</dbReference>
<dbReference type="PDB" id="5CGQ">
    <property type="method" value="X-ray"/>
    <property type="resolution" value="1.18 A"/>
    <property type="chains" value="A=1-268"/>
</dbReference>
<dbReference type="PDB" id="6C73">
    <property type="method" value="X-ray"/>
    <property type="resolution" value="1.65 A"/>
    <property type="chains" value="A=1-268"/>
</dbReference>
<dbReference type="PDB" id="6D0V">
    <property type="method" value="X-ray"/>
    <property type="resolution" value="1.64 A"/>
    <property type="chains" value="A=1-268"/>
</dbReference>
<dbReference type="PDB" id="6DUC">
    <property type="method" value="X-ray"/>
    <property type="resolution" value="1.79 A"/>
    <property type="chains" value="A=1-268"/>
</dbReference>
<dbReference type="PDB" id="6DZ4">
    <property type="method" value="X-ray"/>
    <property type="resolution" value="1.45 A"/>
    <property type="chains" value="A=1-268"/>
</dbReference>
<dbReference type="PDB" id="6DZO">
    <property type="method" value="X-ray"/>
    <property type="resolution" value="1.64 A"/>
    <property type="chains" value="A=1-268"/>
</dbReference>
<dbReference type="PDB" id="6O1H">
    <property type="method" value="X-ray"/>
    <property type="resolution" value="1.64 A"/>
    <property type="chains" value="A=1-268"/>
</dbReference>
<dbReference type="PDB" id="6OSO">
    <property type="method" value="X-ray"/>
    <property type="resolution" value="1.75 A"/>
    <property type="chains" value="A=1-268"/>
</dbReference>
<dbReference type="PDB" id="6OUY">
    <property type="method" value="X-ray"/>
    <property type="resolution" value="1.60 A"/>
    <property type="chains" value="A=1-268"/>
</dbReference>
<dbReference type="PDB" id="6VFD">
    <property type="method" value="X-ray"/>
    <property type="resolution" value="1.70 A"/>
    <property type="chains" value="A=1-268"/>
</dbReference>
<dbReference type="PDB" id="6VNT">
    <property type="method" value="X-ray"/>
    <property type="resolution" value="1.25 A"/>
    <property type="chains" value="A=1-268"/>
</dbReference>
<dbReference type="PDB" id="6WDU">
    <property type="method" value="X-ray"/>
    <property type="resolution" value="1.40 A"/>
    <property type="chains" value="A=1-268"/>
</dbReference>
<dbReference type="PDB" id="6WX3">
    <property type="method" value="X-ray"/>
    <property type="resolution" value="1.20 A"/>
    <property type="chains" value="A=1-268"/>
</dbReference>
<dbReference type="PDB" id="6X0C">
    <property type="method" value="X-ray"/>
    <property type="resolution" value="1.45 A"/>
    <property type="chains" value="A=1-268"/>
</dbReference>
<dbReference type="PDB" id="6XE3">
    <property type="method" value="X-ray"/>
    <property type="resolution" value="1.55 A"/>
    <property type="chains" value="A=1-268"/>
</dbReference>
<dbReference type="PDB" id="6XIN">
    <property type="method" value="X-ray"/>
    <property type="resolution" value="1.75 A"/>
    <property type="chains" value="A=1-268"/>
</dbReference>
<dbReference type="PDB" id="6XNC">
    <property type="method" value="X-ray"/>
    <property type="resolution" value="2.11 A"/>
    <property type="chains" value="A=1-268"/>
</dbReference>
<dbReference type="PDB" id="6XOY">
    <property type="method" value="X-ray"/>
    <property type="resolution" value="1.64 A"/>
    <property type="chains" value="A=1-268"/>
</dbReference>
<dbReference type="PDB" id="6XRH">
    <property type="method" value="X-ray"/>
    <property type="resolution" value="1.44 A"/>
    <property type="chains" value="A=1-268"/>
</dbReference>
<dbReference type="PDB" id="6XSY">
    <property type="method" value="X-ray"/>
    <property type="resolution" value="1.55 A"/>
    <property type="chains" value="A=1-268"/>
</dbReference>
<dbReference type="PDB" id="6XT0">
    <property type="method" value="X-ray"/>
    <property type="resolution" value="1.37 A"/>
    <property type="chains" value="A=1-268"/>
</dbReference>
<dbReference type="PDB" id="7A20">
    <property type="method" value="X-ray"/>
    <property type="resolution" value="2.50 A"/>
    <property type="chains" value="A/B/C/D=1-268"/>
</dbReference>
<dbReference type="PDB" id="7JHW">
    <property type="method" value="X-ray"/>
    <property type="resolution" value="1.65 A"/>
    <property type="chains" value="A=1-268"/>
</dbReference>
<dbReference type="PDB" id="7JLL">
    <property type="method" value="X-ray"/>
    <property type="resolution" value="1.55 A"/>
    <property type="chains" value="A=1-268"/>
</dbReference>
<dbReference type="PDB" id="7JMQ">
    <property type="method" value="X-ray"/>
    <property type="resolution" value="1.60 A"/>
    <property type="chains" value="A=1-268"/>
</dbReference>
<dbReference type="PDB" id="7JQW">
    <property type="method" value="X-ray"/>
    <property type="resolution" value="1.70 A"/>
    <property type="chains" value="A=1-268"/>
</dbReference>
<dbReference type="PDB" id="7JTT">
    <property type="method" value="X-ray"/>
    <property type="resolution" value="1.64 A"/>
    <property type="chains" value="A=1-268"/>
</dbReference>
<dbReference type="PDB" id="7K0B">
    <property type="method" value="X-ray"/>
    <property type="resolution" value="1.57 A"/>
    <property type="chains" value="A=1-268"/>
</dbReference>
<dbReference type="PDB" id="7K5A">
    <property type="method" value="X-ray"/>
    <property type="resolution" value="1.50 A"/>
    <property type="chains" value="A=1-268"/>
</dbReference>
<dbReference type="PDB" id="7KA1">
    <property type="method" value="X-ray"/>
    <property type="resolution" value="1.60 A"/>
    <property type="chains" value="A=1-268"/>
</dbReference>
<dbReference type="PDB" id="7KBN">
    <property type="method" value="X-ray"/>
    <property type="resolution" value="1.60 A"/>
    <property type="chains" value="A=1-268"/>
</dbReference>
<dbReference type="PDB" id="7KH6">
    <property type="method" value="X-ray"/>
    <property type="resolution" value="1.45 A"/>
    <property type="chains" value="A=1-268"/>
</dbReference>
<dbReference type="PDB" id="7KI7">
    <property type="method" value="X-ray"/>
    <property type="resolution" value="1.75 A"/>
    <property type="chains" value="A=1-268"/>
</dbReference>
<dbReference type="PDB" id="7KMC">
    <property type="method" value="X-ray"/>
    <property type="resolution" value="1.50 A"/>
    <property type="chains" value="A=1-268"/>
</dbReference>
<dbReference type="PDB" id="7KQ9">
    <property type="method" value="X-ray"/>
    <property type="resolution" value="1.50 A"/>
    <property type="chains" value="A=1-268"/>
</dbReference>
<dbReference type="PDB" id="7KQF">
    <property type="method" value="X-ray"/>
    <property type="resolution" value="1.47 A"/>
    <property type="chains" value="A=1-268"/>
</dbReference>
<dbReference type="PDB" id="7KU9">
    <property type="method" value="X-ray"/>
    <property type="resolution" value="1.40 A"/>
    <property type="chains" value="A=1-268"/>
</dbReference>
<dbReference type="PDB" id="7KWV">
    <property type="method" value="X-ray"/>
    <property type="resolution" value="1.30 A"/>
    <property type="chains" value="A=1-268"/>
</dbReference>
<dbReference type="PDB" id="7KXC">
    <property type="method" value="X-ray"/>
    <property type="resolution" value="1.51 A"/>
    <property type="chains" value="A=1-268"/>
</dbReference>
<dbReference type="PDB" id="7KYT">
    <property type="method" value="X-ray"/>
    <property type="resolution" value="1.35 A"/>
    <property type="chains" value="A=1-268"/>
</dbReference>
<dbReference type="PDB" id="7L03">
    <property type="method" value="X-ray"/>
    <property type="resolution" value="1.60 A"/>
    <property type="chains" value="A=1-268"/>
</dbReference>
<dbReference type="PDB" id="7L1H">
    <property type="method" value="X-ray"/>
    <property type="resolution" value="1.50 A"/>
    <property type="chains" value="A=1-268"/>
</dbReference>
<dbReference type="PDB" id="7L47">
    <property type="method" value="X-ray"/>
    <property type="resolution" value="1.55 A"/>
    <property type="chains" value="A=1-268"/>
</dbReference>
<dbReference type="PDB" id="7L4D">
    <property type="method" value="X-ray"/>
    <property type="resolution" value="1.60 A"/>
    <property type="chains" value="A=1-268"/>
</dbReference>
<dbReference type="PDB" id="7L5H">
    <property type="method" value="X-ray"/>
    <property type="resolution" value="1.80 A"/>
    <property type="chains" value="A=1-268"/>
</dbReference>
<dbReference type="PDB" id="7LEV">
    <property type="method" value="X-ray"/>
    <property type="resolution" value="1.70 A"/>
    <property type="chains" value="A=1-268"/>
</dbReference>
<dbReference type="PDB" id="7LGX">
    <property type="method" value="X-ray"/>
    <property type="resolution" value="1.80 A"/>
    <property type="chains" value="A=1-268"/>
</dbReference>
<dbReference type="PDB" id="7LKL">
    <property type="method" value="X-ray"/>
    <property type="resolution" value="1.05 A"/>
    <property type="chains" value="A=1-268"/>
</dbReference>
<dbReference type="PDB" id="7LPF">
    <property type="method" value="X-ray"/>
    <property type="resolution" value="1.10 A"/>
    <property type="chains" value="A=1-268"/>
</dbReference>
<dbReference type="PDB" id="7LT4">
    <property type="method" value="X-ray"/>
    <property type="resolution" value="1.80 A"/>
    <property type="chains" value="A=1-268"/>
</dbReference>
<dbReference type="PDB" id="7LTP">
    <property type="method" value="X-ray"/>
    <property type="resolution" value="1.47 A"/>
    <property type="chains" value="A=1-268"/>
</dbReference>
<dbReference type="PDB" id="7LUT">
    <property type="method" value="X-ray"/>
    <property type="resolution" value="1.60 A"/>
    <property type="chains" value="A=1-268"/>
</dbReference>
<dbReference type="PDB" id="7LV5">
    <property type="method" value="X-ray"/>
    <property type="resolution" value="1.60 A"/>
    <property type="chains" value="A=1-268"/>
</dbReference>
<dbReference type="PDB" id="7LVX">
    <property type="method" value="X-ray"/>
    <property type="resolution" value="1.55 A"/>
    <property type="chains" value="A=1-268"/>
</dbReference>
<dbReference type="PDB" id="7LX1">
    <property type="method" value="X-ray"/>
    <property type="resolution" value="1.61 A"/>
    <property type="chains" value="A=1-268"/>
</dbReference>
<dbReference type="PDB" id="7LY8">
    <property type="method" value="X-ray"/>
    <property type="resolution" value="1.55 A"/>
    <property type="chains" value="A=1-268"/>
</dbReference>
<dbReference type="PDB" id="7M2L">
    <property type="method" value="X-ray"/>
    <property type="resolution" value="1.60 A"/>
    <property type="chains" value="A=1-268"/>
</dbReference>
<dbReference type="PDB" id="7M3S">
    <property type="method" value="X-ray"/>
    <property type="resolution" value="1.55 A"/>
    <property type="chains" value="A=1-268"/>
</dbReference>
<dbReference type="PDB" id="7ME8">
    <property type="method" value="X-ray"/>
    <property type="resolution" value="1.60 A"/>
    <property type="chains" value="A=1-268"/>
</dbReference>
<dbReference type="PDB" id="7MT4">
    <property type="method" value="X-ray"/>
    <property type="resolution" value="1.40 A"/>
    <property type="chains" value="A=1-268"/>
</dbReference>
<dbReference type="PDB" id="7MT5">
    <property type="method" value="X-ray"/>
    <property type="resolution" value="1.50 A"/>
    <property type="chains" value="A=1-268"/>
</dbReference>
<dbReference type="PDB" id="7MT6">
    <property type="method" value="X-ray"/>
    <property type="resolution" value="1.70 A"/>
    <property type="chains" value="A=1-268"/>
</dbReference>
<dbReference type="PDB" id="8B03">
    <property type="method" value="X-ray"/>
    <property type="resolution" value="2.22 A"/>
    <property type="chains" value="A=1-268"/>
</dbReference>
<dbReference type="PDB" id="8B05">
    <property type="method" value="X-ray"/>
    <property type="resolution" value="2.10 A"/>
    <property type="chains" value="A=1-268"/>
</dbReference>
<dbReference type="PDB" id="8B06">
    <property type="method" value="X-ray"/>
    <property type="resolution" value="2.49 A"/>
    <property type="chains" value="A=1-268"/>
</dbReference>
<dbReference type="PDB" id="8B08">
    <property type="method" value="X-ray"/>
    <property type="resolution" value="2.50 A"/>
    <property type="chains" value="A=1-268"/>
</dbReference>
<dbReference type="PDB" id="8EYP">
    <property type="method" value="Other"/>
    <property type="resolution" value="1.80 A"/>
    <property type="chains" value="A=1-268"/>
</dbReference>
<dbReference type="PDB" id="8EYS">
    <property type="method" value="X-ray"/>
    <property type="resolution" value="2.20 A"/>
    <property type="chains" value="A=1-268"/>
</dbReference>
<dbReference type="PDB" id="8EZC">
    <property type="method" value="X-ray"/>
    <property type="resolution" value="1.60 A"/>
    <property type="chains" value="A=1-268"/>
</dbReference>
<dbReference type="PDB" id="8RSX">
    <property type="method" value="X-ray"/>
    <property type="resolution" value="2.00 A"/>
    <property type="chains" value="A=1-268"/>
</dbReference>
<dbReference type="PDB" id="8RSY">
    <property type="method" value="X-ray"/>
    <property type="resolution" value="2.11 A"/>
    <property type="chains" value="A=1-268"/>
</dbReference>
<dbReference type="PDB" id="8RSZ">
    <property type="method" value="X-ray"/>
    <property type="resolution" value="2.20 A"/>
    <property type="chains" value="A=1-268"/>
</dbReference>
<dbReference type="PDBsum" id="1A50"/>
<dbReference type="PDBsum" id="1A5A"/>
<dbReference type="PDBsum" id="1A5B"/>
<dbReference type="PDBsum" id="1A5S"/>
<dbReference type="PDBsum" id="1BEU"/>
<dbReference type="PDBsum" id="1BKS"/>
<dbReference type="PDBsum" id="1C29"/>
<dbReference type="PDBsum" id="1C8V"/>
<dbReference type="PDBsum" id="1C9D"/>
<dbReference type="PDBsum" id="1CW2"/>
<dbReference type="PDBsum" id="1CX9"/>
<dbReference type="PDBsum" id="1FUY"/>
<dbReference type="PDBsum" id="1K3U"/>
<dbReference type="PDBsum" id="1K7E"/>
<dbReference type="PDBsum" id="1K7F"/>
<dbReference type="PDBsum" id="1K7X"/>
<dbReference type="PDBsum" id="1K8X"/>
<dbReference type="PDBsum" id="1K8Y"/>
<dbReference type="PDBsum" id="1K8Z"/>
<dbReference type="PDBsum" id="1KFB"/>
<dbReference type="PDBsum" id="1KFC"/>
<dbReference type="PDBsum" id="1KFE"/>
<dbReference type="PDBsum" id="1KFJ"/>
<dbReference type="PDBsum" id="1KFK"/>
<dbReference type="PDBsum" id="1QOP"/>
<dbReference type="PDBsum" id="1QOQ"/>
<dbReference type="PDBsum" id="1TJP"/>
<dbReference type="PDBsum" id="1TTP"/>
<dbReference type="PDBsum" id="1TTQ"/>
<dbReference type="PDBsum" id="1UBS"/>
<dbReference type="PDBsum" id="1WBJ"/>
<dbReference type="PDBsum" id="2CLE"/>
<dbReference type="PDBsum" id="2CLF"/>
<dbReference type="PDBsum" id="2CLH"/>
<dbReference type="PDBsum" id="2CLI"/>
<dbReference type="PDBsum" id="2CLK"/>
<dbReference type="PDBsum" id="2CLL"/>
<dbReference type="PDBsum" id="2CLM"/>
<dbReference type="PDBsum" id="2CLO"/>
<dbReference type="PDBsum" id="2J9X"/>
<dbReference type="PDBsum" id="2J9Y"/>
<dbReference type="PDBsum" id="2J9Z"/>
<dbReference type="PDBsum" id="2RH9"/>
<dbReference type="PDBsum" id="2RHG"/>
<dbReference type="PDBsum" id="2TRS"/>
<dbReference type="PDBsum" id="2TSY"/>
<dbReference type="PDBsum" id="2TYS"/>
<dbReference type="PDBsum" id="2WSY"/>
<dbReference type="PDBsum" id="3CEP"/>
<dbReference type="PDBsum" id="3PR2"/>
<dbReference type="PDBsum" id="4HN4"/>
<dbReference type="PDBsum" id="4HPJ"/>
<dbReference type="PDBsum" id="4HPX"/>
<dbReference type="PDBsum" id="4HT3"/>
<dbReference type="PDBsum" id="4KKX"/>
<dbReference type="PDBsum" id="4WX2"/>
<dbReference type="PDBsum" id="4XUG"/>
<dbReference type="PDBsum" id="4Y6G"/>
<dbReference type="PDBsum" id="4ZQC"/>
<dbReference type="PDBsum" id="5BW6"/>
<dbReference type="PDBsum" id="5CGQ"/>
<dbReference type="PDBsum" id="6C73"/>
<dbReference type="PDBsum" id="6D0V"/>
<dbReference type="PDBsum" id="6DUC"/>
<dbReference type="PDBsum" id="6DZ4"/>
<dbReference type="PDBsum" id="6DZO"/>
<dbReference type="PDBsum" id="6O1H"/>
<dbReference type="PDBsum" id="6OSO"/>
<dbReference type="PDBsum" id="6OUY"/>
<dbReference type="PDBsum" id="6VFD"/>
<dbReference type="PDBsum" id="6VNT"/>
<dbReference type="PDBsum" id="6WDU"/>
<dbReference type="PDBsum" id="6WX3"/>
<dbReference type="PDBsum" id="6X0C"/>
<dbReference type="PDBsum" id="6XE3"/>
<dbReference type="PDBsum" id="6XIN"/>
<dbReference type="PDBsum" id="6XNC"/>
<dbReference type="PDBsum" id="6XOY"/>
<dbReference type="PDBsum" id="6XRH"/>
<dbReference type="PDBsum" id="6XSY"/>
<dbReference type="PDBsum" id="6XT0"/>
<dbReference type="PDBsum" id="7A20"/>
<dbReference type="PDBsum" id="7JHW"/>
<dbReference type="PDBsum" id="7JLL"/>
<dbReference type="PDBsum" id="7JMQ"/>
<dbReference type="PDBsum" id="7JQW"/>
<dbReference type="PDBsum" id="7JTT"/>
<dbReference type="PDBsum" id="7K0B"/>
<dbReference type="PDBsum" id="7K5A"/>
<dbReference type="PDBsum" id="7KA1"/>
<dbReference type="PDBsum" id="7KBN"/>
<dbReference type="PDBsum" id="7KH6"/>
<dbReference type="PDBsum" id="7KI7"/>
<dbReference type="PDBsum" id="7KMC"/>
<dbReference type="PDBsum" id="7KQ9"/>
<dbReference type="PDBsum" id="7KQF"/>
<dbReference type="PDBsum" id="7KU9"/>
<dbReference type="PDBsum" id="7KWV"/>
<dbReference type="PDBsum" id="7KXC"/>
<dbReference type="PDBsum" id="7KYT"/>
<dbReference type="PDBsum" id="7L03"/>
<dbReference type="PDBsum" id="7L1H"/>
<dbReference type="PDBsum" id="7L47"/>
<dbReference type="PDBsum" id="7L4D"/>
<dbReference type="PDBsum" id="7L5H"/>
<dbReference type="PDBsum" id="7LEV"/>
<dbReference type="PDBsum" id="7LGX"/>
<dbReference type="PDBsum" id="7LKL"/>
<dbReference type="PDBsum" id="7LPF"/>
<dbReference type="PDBsum" id="7LT4"/>
<dbReference type="PDBsum" id="7LTP"/>
<dbReference type="PDBsum" id="7LUT"/>
<dbReference type="PDBsum" id="7LV5"/>
<dbReference type="PDBsum" id="7LVX"/>
<dbReference type="PDBsum" id="7LX1"/>
<dbReference type="PDBsum" id="7LY8"/>
<dbReference type="PDBsum" id="7M2L"/>
<dbReference type="PDBsum" id="7M3S"/>
<dbReference type="PDBsum" id="7ME8"/>
<dbReference type="PDBsum" id="7MT4"/>
<dbReference type="PDBsum" id="7MT5"/>
<dbReference type="PDBsum" id="7MT6"/>
<dbReference type="PDBsum" id="8B03"/>
<dbReference type="PDBsum" id="8B05"/>
<dbReference type="PDBsum" id="8B06"/>
<dbReference type="PDBsum" id="8B08"/>
<dbReference type="PDBsum" id="8EYP"/>
<dbReference type="PDBsum" id="8EYS"/>
<dbReference type="PDBsum" id="8EZC"/>
<dbReference type="PDBsum" id="8RSX"/>
<dbReference type="PDBsum" id="8RSY"/>
<dbReference type="PDBsum" id="8RSZ"/>
<dbReference type="SMR" id="P00929"/>
<dbReference type="DIP" id="DIP-1033N"/>
<dbReference type="IntAct" id="P00929">
    <property type="interactions" value="1"/>
</dbReference>
<dbReference type="MINT" id="P00929"/>
<dbReference type="STRING" id="99287.STM1727"/>
<dbReference type="DrugBank" id="DB07748">
    <property type="generic name" value="2-({[4-(TRIFLUOROMETHOXY)PHENYL]SULFONYL}AMINO)ETHYL DIHYDROGEN PHOSPHATE"/>
</dbReference>
<dbReference type="DrugBank" id="DB07732">
    <property type="generic name" value="2-[(2-NAPHTHYLSULFONYL)AMINO]ETHYL DIHYDROGEN PHOSPHATE"/>
</dbReference>
<dbReference type="DrugBank" id="DB07745">
    <property type="generic name" value="2-{[4-(TRIFLUOROMETHOXY)BENZOYL]AMINO}ETHYL DIHYDROGEN PHOSPHATE"/>
</dbReference>
<dbReference type="DrugBank" id="DB07894">
    <property type="generic name" value="4-(2-HYDROXY-4-FLUOROPHENYLTHIO)-BUTYLPHOSPHONIC ACID"/>
</dbReference>
<dbReference type="DrugBank" id="DB07925">
    <property type="generic name" value="4-(2-HYDROXYPHENYLSULFINYL)-BUTYLPHOSPHONIC ACID"/>
</dbReference>
<dbReference type="DrugBank" id="DB07890">
    <property type="generic name" value="4-(2-HYDROXYPHENYLTHIO)-1-BUTENYLPHOSPHONIC ACID"/>
</dbReference>
<dbReference type="DrugBank" id="DB07773">
    <property type="generic name" value="5-FLUOROINDOLE PROPANOL PHOSPHATE"/>
</dbReference>
<dbReference type="DrugBank" id="DB04143">
    <property type="generic name" value="Indole-3-Glycerol Phosphate"/>
</dbReference>
<dbReference type="DrugBank" id="DB03171">
    <property type="generic name" value="Indole-3-Propanol Phosphate"/>
</dbReference>
<dbReference type="DrugBank" id="DB07951">
    <property type="generic name" value="N-(indole-3-acetyl)-L-aspartic acid"/>
</dbReference>
<dbReference type="DrugBank" id="DB07952">
    <property type="generic name" value="N-[1H-INDOL-3-YL-ACETYL]GLYCINE ACID"/>
</dbReference>
<dbReference type="DrugBank" id="DB07953">
    <property type="generic name" value="N-[1H-INDOL-3-YL-ACETYL]VALINE ACID"/>
</dbReference>
<dbReference type="PaxDb" id="99287-STM1727"/>
<dbReference type="GeneID" id="1253246"/>
<dbReference type="KEGG" id="stm:STM1727"/>
<dbReference type="PATRIC" id="fig|99287.12.peg.1823"/>
<dbReference type="HOGENOM" id="CLU_016734_0_4_6"/>
<dbReference type="OMA" id="LVMTYWN"/>
<dbReference type="PhylomeDB" id="P00929"/>
<dbReference type="BioCyc" id="SENT99287:STM1727-MONOMER"/>
<dbReference type="BRENDA" id="4.2.1.20">
    <property type="organism ID" value="5542"/>
</dbReference>
<dbReference type="UniPathway" id="UPA00035">
    <property type="reaction ID" value="UER00044"/>
</dbReference>
<dbReference type="EvolutionaryTrace" id="P00929"/>
<dbReference type="Proteomes" id="UP000001014">
    <property type="component" value="Chromosome"/>
</dbReference>
<dbReference type="GO" id="GO:0005829">
    <property type="term" value="C:cytosol"/>
    <property type="evidence" value="ECO:0000318"/>
    <property type="project" value="GO_Central"/>
</dbReference>
<dbReference type="GO" id="GO:0004834">
    <property type="term" value="F:tryptophan synthase activity"/>
    <property type="evidence" value="ECO:0000318"/>
    <property type="project" value="GO_Central"/>
</dbReference>
<dbReference type="GO" id="GO:0000162">
    <property type="term" value="P:L-tryptophan biosynthetic process"/>
    <property type="evidence" value="ECO:0000318"/>
    <property type="project" value="GO_Central"/>
</dbReference>
<dbReference type="CDD" id="cd04724">
    <property type="entry name" value="Tryptophan_synthase_alpha"/>
    <property type="match status" value="1"/>
</dbReference>
<dbReference type="FunFam" id="3.20.20.70:FF:000037">
    <property type="entry name" value="Tryptophan synthase alpha chain"/>
    <property type="match status" value="1"/>
</dbReference>
<dbReference type="Gene3D" id="3.20.20.70">
    <property type="entry name" value="Aldolase class I"/>
    <property type="match status" value="1"/>
</dbReference>
<dbReference type="HAMAP" id="MF_00131">
    <property type="entry name" value="Trp_synth_alpha"/>
    <property type="match status" value="1"/>
</dbReference>
<dbReference type="InterPro" id="IPR013785">
    <property type="entry name" value="Aldolase_TIM"/>
</dbReference>
<dbReference type="InterPro" id="IPR011060">
    <property type="entry name" value="RibuloseP-bd_barrel"/>
</dbReference>
<dbReference type="InterPro" id="IPR018204">
    <property type="entry name" value="Trp_synthase_alpha_AS"/>
</dbReference>
<dbReference type="InterPro" id="IPR002028">
    <property type="entry name" value="Trp_synthase_suA"/>
</dbReference>
<dbReference type="NCBIfam" id="TIGR00262">
    <property type="entry name" value="trpA"/>
    <property type="match status" value="1"/>
</dbReference>
<dbReference type="PANTHER" id="PTHR43406:SF1">
    <property type="entry name" value="TRYPTOPHAN SYNTHASE ALPHA CHAIN, CHLOROPLASTIC"/>
    <property type="match status" value="1"/>
</dbReference>
<dbReference type="PANTHER" id="PTHR43406">
    <property type="entry name" value="TRYPTOPHAN SYNTHASE, ALPHA CHAIN"/>
    <property type="match status" value="1"/>
</dbReference>
<dbReference type="Pfam" id="PF00290">
    <property type="entry name" value="Trp_syntA"/>
    <property type="match status" value="1"/>
</dbReference>
<dbReference type="SUPFAM" id="SSF51366">
    <property type="entry name" value="Ribulose-phoshate binding barrel"/>
    <property type="match status" value="1"/>
</dbReference>
<dbReference type="PROSITE" id="PS00167">
    <property type="entry name" value="TRP_SYNTHASE_ALPHA"/>
    <property type="match status" value="1"/>
</dbReference>
<reference key="1">
    <citation type="journal article" date="1979" name="Proc. Natl. Acad. Sci. U.S.A.">
        <title>Nucleotide sequences of trpA of Salmonella typhimurium and Escherichia coli: an evolutionary comparison.</title>
        <authorList>
            <person name="Nichols B.P."/>
            <person name="Yanofsky C."/>
        </authorList>
    </citation>
    <scope>NUCLEOTIDE SEQUENCE [GENOMIC DNA]</scope>
</reference>
<reference key="2">
    <citation type="journal article" date="1981" name="Proc. Natl. Acad. Sci. U.S.A.">
        <title>Procedure for production of hybrid genes and proteins and its use in assessing significance of amino acid differences in homologous tryptophan synthetase alpha polypeptides.</title>
        <authorList>
            <person name="Schneider W.P."/>
            <person name="Nichols B.P."/>
            <person name="Yanofsky C."/>
        </authorList>
    </citation>
    <scope>NUCLEOTIDE SEQUENCE [GENOMIC DNA]</scope>
</reference>
<reference key="3">
    <citation type="journal article" date="2001" name="Nature">
        <title>Complete genome sequence of Salmonella enterica serovar Typhimurium LT2.</title>
        <authorList>
            <person name="McClelland M."/>
            <person name="Sanderson K.E."/>
            <person name="Spieth J."/>
            <person name="Clifton S.W."/>
            <person name="Latreille P."/>
            <person name="Courtney L."/>
            <person name="Porwollik S."/>
            <person name="Ali J."/>
            <person name="Dante M."/>
            <person name="Du F."/>
            <person name="Hou S."/>
            <person name="Layman D."/>
            <person name="Leonard S."/>
            <person name="Nguyen C."/>
            <person name="Scott K."/>
            <person name="Holmes A."/>
            <person name="Grewal N."/>
            <person name="Mulvaney E."/>
            <person name="Ryan E."/>
            <person name="Sun H."/>
            <person name="Florea L."/>
            <person name="Miller W."/>
            <person name="Stoneking T."/>
            <person name="Nhan M."/>
            <person name="Waterston R."/>
            <person name="Wilson R.K."/>
        </authorList>
    </citation>
    <scope>NUCLEOTIDE SEQUENCE [LARGE SCALE GENOMIC DNA]</scope>
    <source>
        <strain>LT2 / SGSC1412 / ATCC 700720</strain>
    </source>
</reference>
<reference key="4">
    <citation type="journal article" date="1973" name="J. Biol. Chem.">
        <title>Amino acid sequence studies with the tryptophan synthetase alpha chain of Salmonella typhimurium.</title>
        <authorList>
            <person name="Li S.-L."/>
            <person name="Yanofsky C."/>
        </authorList>
    </citation>
    <scope>PARTIAL PROTEIN SEQUENCE</scope>
</reference>
<reference key="5">
    <citation type="journal article" date="1988" name="J. Biol. Chem.">
        <title>Three-dimensional structure of the tryptophan synthase alpha 2 beta 2 multienzyme complex from Salmonella typhimurium.</title>
        <authorList>
            <person name="Hyde C.C."/>
            <person name="Ahmed S.A."/>
            <person name="Padlan E.A."/>
            <person name="Miles E.W."/>
            <person name="Davies D.R."/>
        </authorList>
    </citation>
    <scope>X-RAY CRYSTALLOGRAPHY (2.5 ANGSTROMS)</scope>
</reference>
<reference key="6">
    <citation type="journal article" date="1997" name="Biochemistry">
        <title>Crystal structures of a mutant (betaK87T) tryptophan synthase alpha2beta2 complex with ligands bound to the active sites of the alpha- and beta-subunits reveal ligand-induced conformational changes.</title>
        <authorList>
            <person name="Rhee S."/>
            <person name="Parris K.D."/>
            <person name="Hyde C.C."/>
            <person name="Ahmed S.A."/>
            <person name="Miles E.W."/>
            <person name="Davies D.R."/>
        </authorList>
    </citation>
    <scope>X-RAY CRYSTALLOGRAPHY (1.9 ANGSTROMS)</scope>
</reference>
<reference key="7">
    <citation type="journal article" date="1998" name="J. Biol. Chem.">
        <title>Cryo-crystallography of a true substrate, indole-3-glycerol phosphate, bound to a mutant (alphaD60N) tryptophan synthase alpha2beta2 complex reveals the correct orientation of active site alphaGlu49.</title>
        <authorList>
            <person name="Rhee S."/>
            <person name="Miles E.W."/>
            <person name="Davies D.R."/>
        </authorList>
    </citation>
    <scope>X-RAY CRYSTALLOGRAPHY (1.9 ANGSTROMS)</scope>
</reference>
<reference key="8">
    <citation type="submission" date="1998-07" db="PDB data bank">
        <title>Refined structure of the native form of the tryptophan synthase multienzyme complex from Salmonella typhimurium.</title>
        <authorList>
            <person name="Hyde C.C."/>
            <person name="Parris K.D."/>
            <person name="Bhat T.N."/>
            <person name="Brown C."/>
            <person name="Ahmed S.A."/>
            <person name="Miles E.W."/>
            <person name="Davies D.R."/>
        </authorList>
    </citation>
    <scope>X-RAY CRYSTALLOGRAPHY (2.2 ANGSTROMS)</scope>
</reference>
<reference key="9">
    <citation type="journal article" date="1999" name="Biochemistry">
        <title>Crystallographic studies of phosphonate-based alpha-reaction transition-state analogues complexed to tryptophan synthase.</title>
        <authorList>
            <person name="Sachpatzidis A."/>
            <person name="Dealwis C."/>
            <person name="Lubetsky J.B."/>
            <person name="Liang P.-H."/>
            <person name="Anderson K.S."/>
            <person name="Lolis E."/>
        </authorList>
    </citation>
    <scope>X-RAY CRYSTALLOGRAPHY (2.0 ANGSTROMS)</scope>
</reference>
<reference key="10">
    <citation type="journal article" date="2000" name="J. Biol. Chem.">
        <title>Structural basis for the impaired channeling and allosteric inter-subunit communication in the beta A169L/beta C170W mutant of tryptophan synthase.</title>
        <authorList>
            <person name="Weyand M."/>
            <person name="Schlichting I."/>
        </authorList>
    </citation>
    <scope>X-RAY CRYSTALLOGRAPHY (2.25 ANGSTROMS)</scope>
</reference>
<reference key="11">
    <citation type="journal article" date="2002" name="J. Mol. Biol.">
        <title>On the role of alphaThr183 in the allosteric regulation and catalytic mechanism of tryptophan synthase.</title>
        <authorList>
            <person name="Kulik V."/>
            <person name="Weyand M."/>
            <person name="Seidel R."/>
            <person name="Niks D."/>
            <person name="Arac D."/>
            <person name="Dunn M.F."/>
            <person name="Schlichting I."/>
        </authorList>
    </citation>
    <scope>X-RAY CRYSTALLOGRAPHY (1.75 ANGSTROMS) OF 17-268</scope>
</reference>
<feature type="chain" id="PRO_0000098839" description="Tryptophan synthase alpha chain">
    <location>
        <begin position="1"/>
        <end position="268"/>
    </location>
</feature>
<feature type="active site" description="Proton acceptor">
    <location>
        <position position="49"/>
    </location>
</feature>
<feature type="active site" description="Proton acceptor">
    <location>
        <position position="60"/>
    </location>
</feature>
<feature type="helix" evidence="6">
    <location>
        <begin position="3"/>
        <end position="13"/>
    </location>
</feature>
<feature type="strand" evidence="6">
    <location>
        <begin position="18"/>
        <end position="24"/>
    </location>
</feature>
<feature type="turn" evidence="2">
    <location>
        <begin position="25"/>
        <end position="28"/>
    </location>
</feature>
<feature type="helix" evidence="6">
    <location>
        <begin position="30"/>
        <end position="42"/>
    </location>
</feature>
<feature type="strand" evidence="6">
    <location>
        <begin position="46"/>
        <end position="51"/>
    </location>
</feature>
<feature type="turn" evidence="4">
    <location>
        <begin position="57"/>
        <end position="59"/>
    </location>
</feature>
<feature type="helix" evidence="6">
    <location>
        <begin position="62"/>
        <end position="73"/>
    </location>
</feature>
<feature type="helix" evidence="6">
    <location>
        <begin position="78"/>
        <end position="91"/>
    </location>
</feature>
<feature type="strand" evidence="6">
    <location>
        <begin position="93"/>
        <end position="95"/>
    </location>
</feature>
<feature type="strand" evidence="6">
    <location>
        <begin position="97"/>
        <end position="101"/>
    </location>
</feature>
<feature type="helix" evidence="6">
    <location>
        <begin position="103"/>
        <end position="107"/>
    </location>
</feature>
<feature type="helix" evidence="6">
    <location>
        <begin position="111"/>
        <end position="121"/>
    </location>
</feature>
<feature type="strand" evidence="6">
    <location>
        <begin position="125"/>
        <end position="128"/>
    </location>
</feature>
<feature type="helix" evidence="6">
    <location>
        <begin position="133"/>
        <end position="135"/>
    </location>
</feature>
<feature type="helix" evidence="6">
    <location>
        <begin position="137"/>
        <end position="145"/>
    </location>
</feature>
<feature type="strand" evidence="7">
    <location>
        <begin position="149"/>
        <end position="151"/>
    </location>
</feature>
<feature type="helix" evidence="6">
    <location>
        <begin position="160"/>
        <end position="169"/>
    </location>
</feature>
<feature type="strand" evidence="6">
    <location>
        <begin position="174"/>
        <end position="177"/>
    </location>
</feature>
<feature type="strand" evidence="6">
    <location>
        <begin position="179"/>
        <end position="181"/>
    </location>
</feature>
<feature type="strand" evidence="5">
    <location>
        <begin position="185"/>
        <end position="187"/>
    </location>
</feature>
<feature type="helix" evidence="6">
    <location>
        <begin position="194"/>
        <end position="202"/>
    </location>
</feature>
<feature type="strand" evidence="6">
    <location>
        <begin position="208"/>
        <end position="213"/>
    </location>
</feature>
<feature type="helix" evidence="6">
    <location>
        <begin position="217"/>
        <end position="225"/>
    </location>
</feature>
<feature type="strand" evidence="6">
    <location>
        <begin position="229"/>
        <end position="233"/>
    </location>
</feature>
<feature type="helix" evidence="6">
    <location>
        <begin position="235"/>
        <end position="243"/>
    </location>
</feature>
<feature type="turn" evidence="6">
    <location>
        <begin position="244"/>
        <end position="246"/>
    </location>
</feature>
<feature type="helix" evidence="6">
    <location>
        <begin position="248"/>
        <end position="264"/>
    </location>
</feature>
<feature type="turn" evidence="3">
    <location>
        <begin position="265"/>
        <end position="267"/>
    </location>
</feature>
<evidence type="ECO:0000255" key="1">
    <source>
        <dbReference type="HAMAP-Rule" id="MF_00131"/>
    </source>
</evidence>
<evidence type="ECO:0007829" key="2">
    <source>
        <dbReference type="PDB" id="1TTP"/>
    </source>
</evidence>
<evidence type="ECO:0007829" key="3">
    <source>
        <dbReference type="PDB" id="6C73"/>
    </source>
</evidence>
<evidence type="ECO:0007829" key="4">
    <source>
        <dbReference type="PDB" id="6OUY"/>
    </source>
</evidence>
<evidence type="ECO:0007829" key="5">
    <source>
        <dbReference type="PDB" id="6VNT"/>
    </source>
</evidence>
<evidence type="ECO:0007829" key="6">
    <source>
        <dbReference type="PDB" id="7LKL"/>
    </source>
</evidence>
<evidence type="ECO:0007829" key="7">
    <source>
        <dbReference type="PDB" id="7LPF"/>
    </source>
</evidence>
<accession>P00929</accession>
<proteinExistence type="evidence at protein level"/>
<gene>
    <name evidence="1" type="primary">trpA</name>
    <name type="ordered locus">STM1727</name>
</gene>
<comment type="function">
    <text>The alpha subunit is responsible for the aldol cleavage of indoleglycerol phosphate to indole and glyceraldehyde 3-phosphate.</text>
</comment>
<comment type="catalytic activity">
    <reaction evidence="1">
        <text>(1S,2R)-1-C-(indol-3-yl)glycerol 3-phosphate + L-serine = D-glyceraldehyde 3-phosphate + L-tryptophan + H2O</text>
        <dbReference type="Rhea" id="RHEA:10532"/>
        <dbReference type="ChEBI" id="CHEBI:15377"/>
        <dbReference type="ChEBI" id="CHEBI:33384"/>
        <dbReference type="ChEBI" id="CHEBI:57912"/>
        <dbReference type="ChEBI" id="CHEBI:58866"/>
        <dbReference type="ChEBI" id="CHEBI:59776"/>
        <dbReference type="EC" id="4.2.1.20"/>
    </reaction>
</comment>
<comment type="pathway">
    <text evidence="1">Amino-acid biosynthesis; L-tryptophan biosynthesis; L-tryptophan from chorismate: step 5/5.</text>
</comment>
<comment type="subunit">
    <text>Tetramer of two alpha and two beta chains.</text>
</comment>
<comment type="interaction">
    <interactant intactId="EBI-1028423">
        <id>P00929</id>
    </interactant>
    <interactant intactId="EBI-1028431">
        <id>P0A2K1</id>
        <label>trpB</label>
    </interactant>
    <organismsDiffer>false</organismsDiffer>
    <experiments>24</experiments>
</comment>
<comment type="similarity">
    <text evidence="1">Belongs to the TrpA family.</text>
</comment>
<keyword id="KW-0002">3D-structure</keyword>
<keyword id="KW-0021">Allosteric enzyme</keyword>
<keyword id="KW-0028">Amino-acid biosynthesis</keyword>
<keyword id="KW-0057">Aromatic amino acid biosynthesis</keyword>
<keyword id="KW-0903">Direct protein sequencing</keyword>
<keyword id="KW-0456">Lyase</keyword>
<keyword id="KW-1185">Reference proteome</keyword>
<keyword id="KW-0822">Tryptophan biosynthesis</keyword>
<protein>
    <recommendedName>
        <fullName evidence="1">Tryptophan synthase alpha chain</fullName>
        <ecNumber evidence="1">4.2.1.20</ecNumber>
    </recommendedName>
</protein>
<sequence length="268" mass="28671">MERYENLFAQLNDRREGAFVPFVTLGDPGIEQSLKIIDTLIDAGADALELGVPFSDPLADGPTIQNANLRAFAAGVTPAQCFEMLALIREKHPTIPIGLLMYANLVFNNGIDAFYARCEQVGVDSVLVADVPVEESAPFRQAALRHNIAPIFICPPNADDDLLRQVASYGRGYTYLLSRSGVTGAENRGALPLHHLIEKLKEYHAAPALQGFGISSPEQVSAAVRAGAAGAISGSAIVKIIEKNLASPKQMLAELRSFVSAMKAASRA</sequence>
<name>TRPA_SALTY</name>
<organism>
    <name type="scientific">Salmonella typhimurium (strain LT2 / SGSC1412 / ATCC 700720)</name>
    <dbReference type="NCBI Taxonomy" id="99287"/>
    <lineage>
        <taxon>Bacteria</taxon>
        <taxon>Pseudomonadati</taxon>
        <taxon>Pseudomonadota</taxon>
        <taxon>Gammaproteobacteria</taxon>
        <taxon>Enterobacterales</taxon>
        <taxon>Enterobacteriaceae</taxon>
        <taxon>Salmonella</taxon>
    </lineage>
</organism>